<evidence type="ECO:0000255" key="1">
    <source>
        <dbReference type="HAMAP-Rule" id="MF_01008"/>
    </source>
</evidence>
<evidence type="ECO:0000255" key="2">
    <source>
        <dbReference type="PROSITE-ProRule" id="PRU01076"/>
    </source>
</evidence>
<accession>Q1GYZ2</accession>
<organism>
    <name type="scientific">Methylobacillus flagellatus (strain ATCC 51484 / DSM 6875 / VKM B-1610 / KT)</name>
    <dbReference type="NCBI Taxonomy" id="265072"/>
    <lineage>
        <taxon>Bacteria</taxon>
        <taxon>Pseudomonadati</taxon>
        <taxon>Pseudomonadota</taxon>
        <taxon>Betaproteobacteria</taxon>
        <taxon>Nitrosomonadales</taxon>
        <taxon>Methylophilaceae</taxon>
        <taxon>Methylobacillus</taxon>
    </lineage>
</organism>
<proteinExistence type="inferred from homology"/>
<protein>
    <recommendedName>
        <fullName>Transcriptional regulator MraZ</fullName>
    </recommendedName>
</protein>
<name>MRAZ_METFK</name>
<keyword id="KW-0963">Cytoplasm</keyword>
<keyword id="KW-0238">DNA-binding</keyword>
<keyword id="KW-1185">Reference proteome</keyword>
<keyword id="KW-0677">Repeat</keyword>
<keyword id="KW-0804">Transcription</keyword>
<keyword id="KW-0805">Transcription regulation</keyword>
<comment type="subunit">
    <text evidence="1">Forms oligomers.</text>
</comment>
<comment type="subcellular location">
    <subcellularLocation>
        <location evidence="1">Cytoplasm</location>
        <location evidence="1">Nucleoid</location>
    </subcellularLocation>
</comment>
<comment type="similarity">
    <text evidence="1">Belongs to the MraZ family.</text>
</comment>
<gene>
    <name evidence="1" type="primary">mraZ</name>
    <name type="ordered locus">Mfla_2278</name>
</gene>
<reference key="1">
    <citation type="submission" date="2006-03" db="EMBL/GenBank/DDBJ databases">
        <title>Complete sequence of Methylobacillus flagellatus KT.</title>
        <authorList>
            <consortium name="US DOE Joint Genome Institute"/>
            <person name="Copeland A."/>
            <person name="Lucas S."/>
            <person name="Lapidus A."/>
            <person name="Barry K."/>
            <person name="Detter J.C."/>
            <person name="Glavina del Rio T."/>
            <person name="Hammon N."/>
            <person name="Israni S."/>
            <person name="Dalin E."/>
            <person name="Tice H."/>
            <person name="Pitluck S."/>
            <person name="Brettin T."/>
            <person name="Bruce D."/>
            <person name="Han C."/>
            <person name="Tapia R."/>
            <person name="Saunders E."/>
            <person name="Gilna P."/>
            <person name="Schmutz J."/>
            <person name="Larimer F."/>
            <person name="Land M."/>
            <person name="Kyrpides N."/>
            <person name="Anderson I."/>
            <person name="Richardson P."/>
        </authorList>
    </citation>
    <scope>NUCLEOTIDE SEQUENCE [LARGE SCALE GENOMIC DNA]</scope>
    <source>
        <strain>ATCC 51484 / DSM 6875 / VKM B-1610 / KT</strain>
    </source>
</reference>
<dbReference type="EMBL" id="CP000284">
    <property type="protein sequence ID" value="ABE50545.1"/>
    <property type="molecule type" value="Genomic_DNA"/>
</dbReference>
<dbReference type="RefSeq" id="WP_011480499.1">
    <property type="nucleotide sequence ID" value="NC_007947.1"/>
</dbReference>
<dbReference type="SMR" id="Q1GYZ2"/>
<dbReference type="STRING" id="265072.Mfla_2278"/>
<dbReference type="KEGG" id="mfa:Mfla_2278"/>
<dbReference type="eggNOG" id="COG2001">
    <property type="taxonomic scope" value="Bacteria"/>
</dbReference>
<dbReference type="HOGENOM" id="CLU_107907_2_0_4"/>
<dbReference type="OrthoDB" id="9807753at2"/>
<dbReference type="Proteomes" id="UP000002440">
    <property type="component" value="Chromosome"/>
</dbReference>
<dbReference type="GO" id="GO:0005737">
    <property type="term" value="C:cytoplasm"/>
    <property type="evidence" value="ECO:0007669"/>
    <property type="project" value="UniProtKB-UniRule"/>
</dbReference>
<dbReference type="GO" id="GO:0009295">
    <property type="term" value="C:nucleoid"/>
    <property type="evidence" value="ECO:0007669"/>
    <property type="project" value="UniProtKB-SubCell"/>
</dbReference>
<dbReference type="GO" id="GO:0003700">
    <property type="term" value="F:DNA-binding transcription factor activity"/>
    <property type="evidence" value="ECO:0007669"/>
    <property type="project" value="UniProtKB-UniRule"/>
</dbReference>
<dbReference type="GO" id="GO:0000976">
    <property type="term" value="F:transcription cis-regulatory region binding"/>
    <property type="evidence" value="ECO:0007669"/>
    <property type="project" value="TreeGrafter"/>
</dbReference>
<dbReference type="GO" id="GO:2000143">
    <property type="term" value="P:negative regulation of DNA-templated transcription initiation"/>
    <property type="evidence" value="ECO:0007669"/>
    <property type="project" value="TreeGrafter"/>
</dbReference>
<dbReference type="CDD" id="cd16321">
    <property type="entry name" value="MraZ_C"/>
    <property type="match status" value="1"/>
</dbReference>
<dbReference type="CDD" id="cd16320">
    <property type="entry name" value="MraZ_N"/>
    <property type="match status" value="1"/>
</dbReference>
<dbReference type="Gene3D" id="3.40.1550.20">
    <property type="entry name" value="Transcriptional regulator MraZ domain"/>
    <property type="match status" value="1"/>
</dbReference>
<dbReference type="HAMAP" id="MF_01008">
    <property type="entry name" value="MraZ"/>
    <property type="match status" value="1"/>
</dbReference>
<dbReference type="InterPro" id="IPR003444">
    <property type="entry name" value="MraZ"/>
</dbReference>
<dbReference type="InterPro" id="IPR035644">
    <property type="entry name" value="MraZ_C"/>
</dbReference>
<dbReference type="InterPro" id="IPR020603">
    <property type="entry name" value="MraZ_dom"/>
</dbReference>
<dbReference type="InterPro" id="IPR035642">
    <property type="entry name" value="MraZ_N"/>
</dbReference>
<dbReference type="InterPro" id="IPR038619">
    <property type="entry name" value="MraZ_sf"/>
</dbReference>
<dbReference type="InterPro" id="IPR007159">
    <property type="entry name" value="SpoVT-AbrB_dom"/>
</dbReference>
<dbReference type="InterPro" id="IPR037914">
    <property type="entry name" value="SpoVT-AbrB_sf"/>
</dbReference>
<dbReference type="NCBIfam" id="TIGR00242">
    <property type="entry name" value="division/cell wall cluster transcriptional repressor MraZ"/>
    <property type="match status" value="1"/>
</dbReference>
<dbReference type="PANTHER" id="PTHR34701">
    <property type="entry name" value="TRANSCRIPTIONAL REGULATOR MRAZ"/>
    <property type="match status" value="1"/>
</dbReference>
<dbReference type="PANTHER" id="PTHR34701:SF1">
    <property type="entry name" value="TRANSCRIPTIONAL REGULATOR MRAZ"/>
    <property type="match status" value="1"/>
</dbReference>
<dbReference type="Pfam" id="PF02381">
    <property type="entry name" value="MraZ"/>
    <property type="match status" value="2"/>
</dbReference>
<dbReference type="SUPFAM" id="SSF89447">
    <property type="entry name" value="AbrB/MazE/MraZ-like"/>
    <property type="match status" value="1"/>
</dbReference>
<dbReference type="PROSITE" id="PS51740">
    <property type="entry name" value="SPOVT_ABRB"/>
    <property type="match status" value="2"/>
</dbReference>
<feature type="chain" id="PRO_1000062895" description="Transcriptional regulator MraZ">
    <location>
        <begin position="1"/>
        <end position="148"/>
    </location>
</feature>
<feature type="domain" description="SpoVT-AbrB 1" evidence="2">
    <location>
        <begin position="5"/>
        <end position="51"/>
    </location>
</feature>
<feature type="domain" description="SpoVT-AbrB 2" evidence="2">
    <location>
        <begin position="80"/>
        <end position="123"/>
    </location>
</feature>
<sequence length="148" mass="16428">MFRGATSLNMDAKGRLAVPAKHRDALHAQSEGNLVLTAHPHRCLLLYPLPAWEPIQSKIMALSSFDRQSSALQRLLVGFAEDVELDGAGRLLVSPVLREFAGFEKQVMLVGQGSHFELWSMEAWRAQLQQVMSAESVELPDELEGFSL</sequence>